<sequence>MDTHVRGTIRGAIDLMRIGNAVAAGVLTFTGAFVAGGFAVTTAHVTGAVAATIFATAAGNAINDYFDRAIDKINRPMRPIPRGAISERGAIVFSGFLFVAAVVSTSVLPLIAIVLALMNLLALVAYTELFKGLPGVGNAIVAYLTGSTFLFGAAAIGRITDFGVVVLFILAALATATREIIKDIEDLDGDRKEGLQTLPIVIGVTPAYRVATGVLLVAVIASIVPYVIGIFGIWYLTLVVPADMIMLIGVWQAPDNPTQGQQLLKRGMFVAAAAFVVGRAVVVAGI</sequence>
<evidence type="ECO:0000255" key="1">
    <source>
        <dbReference type="HAMAP-Rule" id="MF_01286"/>
    </source>
</evidence>
<gene>
    <name type="ordered locus">HQ_1884A</name>
</gene>
<reference key="1">
    <citation type="journal article" date="2006" name="BMC Genomics">
        <title>The genome of the square archaeon Haloquadratum walsbyi: life at the limits of water activity.</title>
        <authorList>
            <person name="Bolhuis H."/>
            <person name="Palm P."/>
            <person name="Wende A."/>
            <person name="Falb M."/>
            <person name="Rampp M."/>
            <person name="Rodriguez-Valera F."/>
            <person name="Pfeiffer F."/>
            <person name="Oesterhelt D."/>
        </authorList>
    </citation>
    <scope>NUCLEOTIDE SEQUENCE [LARGE SCALE GENOMIC DNA]</scope>
    <source>
        <strain>DSM 16790 / HBSQ001</strain>
    </source>
</reference>
<dbReference type="EC" id="2.5.1.42" evidence="1"/>
<dbReference type="EMBL" id="AM180088">
    <property type="protein sequence ID" value="CAJ52012.1"/>
    <property type="molecule type" value="Genomic_DNA"/>
</dbReference>
<dbReference type="RefSeq" id="WP_011571159.1">
    <property type="nucleotide sequence ID" value="NC_008212.1"/>
</dbReference>
<dbReference type="SMR" id="Q18J00"/>
<dbReference type="STRING" id="362976.HQ_1884A"/>
<dbReference type="GeneID" id="4194880"/>
<dbReference type="KEGG" id="hwa:HQ_1884A"/>
<dbReference type="eggNOG" id="arCOG00476">
    <property type="taxonomic scope" value="Archaea"/>
</dbReference>
<dbReference type="HOGENOM" id="CLU_073311_1_1_2"/>
<dbReference type="UniPathway" id="UPA00940"/>
<dbReference type="Proteomes" id="UP000001975">
    <property type="component" value="Chromosome"/>
</dbReference>
<dbReference type="GO" id="GO:0005886">
    <property type="term" value="C:plasma membrane"/>
    <property type="evidence" value="ECO:0007669"/>
    <property type="project" value="UniProtKB-SubCell"/>
</dbReference>
<dbReference type="GO" id="GO:0047295">
    <property type="term" value="F:geranylgeranylglycerol-phosphate geranylgeranyltransferase activity"/>
    <property type="evidence" value="ECO:0007669"/>
    <property type="project" value="UniProtKB-UniRule"/>
</dbReference>
<dbReference type="GO" id="GO:0000287">
    <property type="term" value="F:magnesium ion binding"/>
    <property type="evidence" value="ECO:0007669"/>
    <property type="project" value="UniProtKB-UniRule"/>
</dbReference>
<dbReference type="GO" id="GO:0046474">
    <property type="term" value="P:glycerophospholipid biosynthetic process"/>
    <property type="evidence" value="ECO:0007669"/>
    <property type="project" value="UniProtKB-UniRule"/>
</dbReference>
<dbReference type="CDD" id="cd13961">
    <property type="entry name" value="PT_UbiA_DGGGPS"/>
    <property type="match status" value="1"/>
</dbReference>
<dbReference type="Gene3D" id="1.10.357.140">
    <property type="entry name" value="UbiA prenyltransferase"/>
    <property type="match status" value="1"/>
</dbReference>
<dbReference type="Gene3D" id="1.20.120.1780">
    <property type="entry name" value="UbiA prenyltransferase"/>
    <property type="match status" value="1"/>
</dbReference>
<dbReference type="HAMAP" id="MF_01286">
    <property type="entry name" value="DGGGP_synth"/>
    <property type="match status" value="1"/>
</dbReference>
<dbReference type="InterPro" id="IPR023547">
    <property type="entry name" value="DGGGP_synth"/>
</dbReference>
<dbReference type="InterPro" id="IPR050475">
    <property type="entry name" value="Prenyltransferase_related"/>
</dbReference>
<dbReference type="InterPro" id="IPR000537">
    <property type="entry name" value="UbiA_prenyltransferase"/>
</dbReference>
<dbReference type="InterPro" id="IPR044878">
    <property type="entry name" value="UbiA_sf"/>
</dbReference>
<dbReference type="NCBIfam" id="NF009521">
    <property type="entry name" value="PRK12882.1"/>
    <property type="match status" value="1"/>
</dbReference>
<dbReference type="PANTHER" id="PTHR42723">
    <property type="entry name" value="CHLOROPHYLL SYNTHASE"/>
    <property type="match status" value="1"/>
</dbReference>
<dbReference type="PANTHER" id="PTHR42723:SF1">
    <property type="entry name" value="CHLOROPHYLL SYNTHASE, CHLOROPLASTIC"/>
    <property type="match status" value="1"/>
</dbReference>
<dbReference type="Pfam" id="PF01040">
    <property type="entry name" value="UbiA"/>
    <property type="match status" value="1"/>
</dbReference>
<feature type="chain" id="PRO_0000350695" description="Digeranylgeranylglyceryl phosphate synthase">
    <location>
        <begin position="1"/>
        <end position="286"/>
    </location>
</feature>
<feature type="transmembrane region" description="Helical" evidence="1">
    <location>
        <begin position="21"/>
        <end position="41"/>
    </location>
</feature>
<feature type="transmembrane region" description="Helical" evidence="1">
    <location>
        <begin position="42"/>
        <end position="62"/>
    </location>
</feature>
<feature type="transmembrane region" description="Helical" evidence="1">
    <location>
        <begin position="96"/>
        <end position="116"/>
    </location>
</feature>
<feature type="transmembrane region" description="Helical" evidence="1">
    <location>
        <begin position="133"/>
        <end position="155"/>
    </location>
</feature>
<feature type="transmembrane region" description="Helical" evidence="1">
    <location>
        <begin position="162"/>
        <end position="181"/>
    </location>
</feature>
<feature type="transmembrane region" description="Helical" evidence="1">
    <location>
        <begin position="214"/>
        <end position="234"/>
    </location>
</feature>
<feature type="transmembrane region" description="Helical" evidence="1">
    <location>
        <begin position="235"/>
        <end position="255"/>
    </location>
</feature>
<feature type="transmembrane region" description="Helical" evidence="1">
    <location>
        <begin position="266"/>
        <end position="286"/>
    </location>
</feature>
<name>DGGGP_HALWD</name>
<accession>Q18J00</accession>
<comment type="function">
    <text evidence="1">Prenyltransferase that catalyzes the transfer of the geranylgeranyl moiety of geranylgeranyl diphosphate (GGPP) to the C2 hydroxyl of (S)-3-O-geranylgeranylglyceryl phosphate (GGGP). This reaction is the second ether-bond-formation step in the biosynthesis of archaeal membrane lipids.</text>
</comment>
<comment type="catalytic activity">
    <reaction evidence="1">
        <text>sn-3-O-(geranylgeranyl)glycerol 1-phosphate + (2E,6E,10E)-geranylgeranyl diphosphate = 2,3-bis-O-(geranylgeranyl)-sn-glycerol 1-phosphate + diphosphate</text>
        <dbReference type="Rhea" id="RHEA:18109"/>
        <dbReference type="ChEBI" id="CHEBI:33019"/>
        <dbReference type="ChEBI" id="CHEBI:57677"/>
        <dbReference type="ChEBI" id="CHEBI:58756"/>
        <dbReference type="ChEBI" id="CHEBI:58837"/>
        <dbReference type="EC" id="2.5.1.42"/>
    </reaction>
</comment>
<comment type="cofactor">
    <cofactor evidence="1">
        <name>Mg(2+)</name>
        <dbReference type="ChEBI" id="CHEBI:18420"/>
    </cofactor>
</comment>
<comment type="pathway">
    <text evidence="1">Membrane lipid metabolism; glycerophospholipid metabolism.</text>
</comment>
<comment type="subcellular location">
    <subcellularLocation>
        <location evidence="1">Cell membrane</location>
        <topology evidence="1">Multi-pass membrane protein</topology>
    </subcellularLocation>
</comment>
<comment type="similarity">
    <text evidence="1">Belongs to the UbiA prenyltransferase family. DGGGP synthase subfamily.</text>
</comment>
<proteinExistence type="inferred from homology"/>
<protein>
    <recommendedName>
        <fullName evidence="1">Digeranylgeranylglyceryl phosphate synthase</fullName>
        <shortName evidence="1">DGGGP synthase</shortName>
        <shortName evidence="1">DGGGPS</shortName>
        <ecNumber evidence="1">2.5.1.42</ecNumber>
    </recommendedName>
    <alternativeName>
        <fullName evidence="1">(S)-2,3-di-O-geranylgeranylglyceryl phosphate synthase</fullName>
    </alternativeName>
    <alternativeName>
        <fullName evidence="1">Geranylgeranylglycerol-phosphate geranylgeranyltransferase</fullName>
    </alternativeName>
</protein>
<organism>
    <name type="scientific">Haloquadratum walsbyi (strain DSM 16790 / HBSQ001)</name>
    <dbReference type="NCBI Taxonomy" id="362976"/>
    <lineage>
        <taxon>Archaea</taxon>
        <taxon>Methanobacteriati</taxon>
        <taxon>Methanobacteriota</taxon>
        <taxon>Stenosarchaea group</taxon>
        <taxon>Halobacteria</taxon>
        <taxon>Halobacteriales</taxon>
        <taxon>Haloferacaceae</taxon>
        <taxon>Haloquadratum</taxon>
    </lineage>
</organism>
<keyword id="KW-1003">Cell membrane</keyword>
<keyword id="KW-0444">Lipid biosynthesis</keyword>
<keyword id="KW-0443">Lipid metabolism</keyword>
<keyword id="KW-0460">Magnesium</keyword>
<keyword id="KW-0472">Membrane</keyword>
<keyword id="KW-0594">Phospholipid biosynthesis</keyword>
<keyword id="KW-1208">Phospholipid metabolism</keyword>
<keyword id="KW-1185">Reference proteome</keyword>
<keyword id="KW-0808">Transferase</keyword>
<keyword id="KW-0812">Transmembrane</keyword>
<keyword id="KW-1133">Transmembrane helix</keyword>